<reference key="1">
    <citation type="journal article" date="2002" name="Proc. Natl. Acad. Sci. U.S.A.">
        <title>The complete genome sequence of Chlorobium tepidum TLS, a photosynthetic, anaerobic, green-sulfur bacterium.</title>
        <authorList>
            <person name="Eisen J.A."/>
            <person name="Nelson K.E."/>
            <person name="Paulsen I.T."/>
            <person name="Heidelberg J.F."/>
            <person name="Wu M."/>
            <person name="Dodson R.J."/>
            <person name="DeBoy R.T."/>
            <person name="Gwinn M.L."/>
            <person name="Nelson W.C."/>
            <person name="Haft D.H."/>
            <person name="Hickey E.K."/>
            <person name="Peterson J.D."/>
            <person name="Durkin A.S."/>
            <person name="Kolonay J.F."/>
            <person name="Yang F."/>
            <person name="Holt I.E."/>
            <person name="Umayam L.A."/>
            <person name="Mason T.M."/>
            <person name="Brenner M."/>
            <person name="Shea T.P."/>
            <person name="Parksey D.S."/>
            <person name="Nierman W.C."/>
            <person name="Feldblyum T.V."/>
            <person name="Hansen C.L."/>
            <person name="Craven M.B."/>
            <person name="Radune D."/>
            <person name="Vamathevan J.J."/>
            <person name="Khouri H.M."/>
            <person name="White O."/>
            <person name="Gruber T.M."/>
            <person name="Ketchum K.A."/>
            <person name="Venter J.C."/>
            <person name="Tettelin H."/>
            <person name="Bryant D.A."/>
            <person name="Fraser C.M."/>
        </authorList>
    </citation>
    <scope>NUCLEOTIDE SEQUENCE [LARGE SCALE GENOMIC DNA]</scope>
    <source>
        <strain>ATCC 49652 / DSM 12025 / NBRC 103806 / TLS</strain>
    </source>
</reference>
<name>DHSL_CHLTE</name>
<comment type="similarity">
    <text evidence="1">Belongs to the deoxyhypusine synthase family.</text>
</comment>
<evidence type="ECO:0000305" key="1"/>
<gene>
    <name type="ordered locus">CT0011</name>
</gene>
<protein>
    <recommendedName>
        <fullName>Deoxyhypusine synthase-like protein</fullName>
        <ecNumber>2.5.-.-</ecNumber>
    </recommendedName>
</protein>
<keyword id="KW-1185">Reference proteome</keyword>
<keyword id="KW-0808">Transferase</keyword>
<sequence>MEERSMQKAGFLKEPIKHIGITKHNVVPMVEEMADMAFQARNLARAAFIVDLMQKDKECAVILTLAGSLISAGLKQVIIDMLEHNMVDVIVSTGANIVDQDFFEALGFKHWKGSQFVDDSELRELAIDRIYDTYIDEDELRVCDDTIAIIANSMQPGAYSSREFIVEMGKYIEEKGLDKNSIVYKAYEKGVPIFCPAFSDCSAGFGLVHHQWHNPDQHVSIDSVKDFRELTKIKIENDKTGIFMIGGGVPKNFTQDIVVAAEVLGYENVSMHTYAVQITVADERDGALSGSTLKEASSWGKVDTVYEQMVFAEATVAMPLIAGYAYHKRNWEGRPARNFNAMLDAKPVNA</sequence>
<proteinExistence type="inferred from homology"/>
<accession>Q8KGF7</accession>
<feature type="chain" id="PRO_0000134514" description="Deoxyhypusine synthase-like protein">
    <location>
        <begin position="1"/>
        <end position="350"/>
    </location>
</feature>
<organism>
    <name type="scientific">Chlorobaculum tepidum (strain ATCC 49652 / DSM 12025 / NBRC 103806 / TLS)</name>
    <name type="common">Chlorobium tepidum</name>
    <dbReference type="NCBI Taxonomy" id="194439"/>
    <lineage>
        <taxon>Bacteria</taxon>
        <taxon>Pseudomonadati</taxon>
        <taxon>Chlorobiota</taxon>
        <taxon>Chlorobiia</taxon>
        <taxon>Chlorobiales</taxon>
        <taxon>Chlorobiaceae</taxon>
        <taxon>Chlorobaculum</taxon>
    </lineage>
</organism>
<dbReference type="EC" id="2.5.-.-"/>
<dbReference type="EMBL" id="AE006470">
    <property type="protein sequence ID" value="AAM71259.1"/>
    <property type="molecule type" value="Genomic_DNA"/>
</dbReference>
<dbReference type="RefSeq" id="NP_660917.1">
    <property type="nucleotide sequence ID" value="NC_002932.3"/>
</dbReference>
<dbReference type="RefSeq" id="WP_010931705.1">
    <property type="nucleotide sequence ID" value="NC_002932.3"/>
</dbReference>
<dbReference type="SMR" id="Q8KGF7"/>
<dbReference type="STRING" id="194439.CT0011"/>
<dbReference type="EnsemblBacteria" id="AAM71259">
    <property type="protein sequence ID" value="AAM71259"/>
    <property type="gene ID" value="CT0011"/>
</dbReference>
<dbReference type="KEGG" id="cte:CT0011"/>
<dbReference type="PATRIC" id="fig|194439.7.peg.11"/>
<dbReference type="eggNOG" id="COG1899">
    <property type="taxonomic scope" value="Bacteria"/>
</dbReference>
<dbReference type="HOGENOM" id="CLU_039781_1_0_10"/>
<dbReference type="OrthoDB" id="9771211at2"/>
<dbReference type="Proteomes" id="UP000001007">
    <property type="component" value="Chromosome"/>
</dbReference>
<dbReference type="GO" id="GO:0005737">
    <property type="term" value="C:cytoplasm"/>
    <property type="evidence" value="ECO:0007669"/>
    <property type="project" value="TreeGrafter"/>
</dbReference>
<dbReference type="GO" id="GO:0034038">
    <property type="term" value="F:deoxyhypusine synthase activity"/>
    <property type="evidence" value="ECO:0007669"/>
    <property type="project" value="TreeGrafter"/>
</dbReference>
<dbReference type="Gene3D" id="3.40.910.10">
    <property type="entry name" value="Deoxyhypusine synthase"/>
    <property type="match status" value="1"/>
</dbReference>
<dbReference type="HAMAP" id="MF_00640">
    <property type="entry name" value="DHS_like"/>
    <property type="match status" value="1"/>
</dbReference>
<dbReference type="InterPro" id="IPR002773">
    <property type="entry name" value="Deoxyhypusine_synthase"/>
</dbReference>
<dbReference type="InterPro" id="IPR023496">
    <property type="entry name" value="Deoxyhypusine_synthase-like"/>
</dbReference>
<dbReference type="InterPro" id="IPR036982">
    <property type="entry name" value="Deoxyhypusine_synthase_sf"/>
</dbReference>
<dbReference type="InterPro" id="IPR029035">
    <property type="entry name" value="DHS-like_NAD/FAD-binding_dom"/>
</dbReference>
<dbReference type="NCBIfam" id="NF002699">
    <property type="entry name" value="PRK02492.1"/>
    <property type="match status" value="1"/>
</dbReference>
<dbReference type="PANTHER" id="PTHR11703">
    <property type="entry name" value="DEOXYHYPUSINE SYNTHASE"/>
    <property type="match status" value="1"/>
</dbReference>
<dbReference type="PANTHER" id="PTHR11703:SF2">
    <property type="entry name" value="DEOXYHYPUSINE SYNTHASE-LIKE PROTEIN"/>
    <property type="match status" value="1"/>
</dbReference>
<dbReference type="Pfam" id="PF01916">
    <property type="entry name" value="DS"/>
    <property type="match status" value="1"/>
</dbReference>
<dbReference type="SUPFAM" id="SSF52467">
    <property type="entry name" value="DHS-like NAD/FAD-binding domain"/>
    <property type="match status" value="1"/>
</dbReference>